<keyword id="KW-0004">4Fe-4S</keyword>
<keyword id="KW-0067">ATP-binding</keyword>
<keyword id="KW-0077">Bacteriochlorophyll biosynthesis</keyword>
<keyword id="KW-0149">Chlorophyll biosynthesis</keyword>
<keyword id="KW-0408">Iron</keyword>
<keyword id="KW-0411">Iron-sulfur</keyword>
<keyword id="KW-0479">Metal-binding</keyword>
<keyword id="KW-0547">Nucleotide-binding</keyword>
<keyword id="KW-0560">Oxidoreductase</keyword>
<keyword id="KW-0602">Photosynthesis</keyword>
<feature type="chain" id="PRO_1000048420" description="Light-independent protochlorophyllide reductase subunit B">
    <location>
        <begin position="1"/>
        <end position="535"/>
    </location>
</feature>
<feature type="active site" description="Proton donor" evidence="1">
    <location>
        <position position="287"/>
    </location>
</feature>
<feature type="binding site" evidence="1">
    <location>
        <position position="36"/>
    </location>
    <ligand>
        <name>[4Fe-4S] cluster</name>
        <dbReference type="ChEBI" id="CHEBI:49883"/>
        <note>ligand shared with heterodimeric partner</note>
    </ligand>
</feature>
<feature type="binding site" evidence="1">
    <location>
        <begin position="422"/>
        <end position="423"/>
    </location>
    <ligand>
        <name>substrate</name>
    </ligand>
</feature>
<evidence type="ECO:0000255" key="1">
    <source>
        <dbReference type="HAMAP-Rule" id="MF_00353"/>
    </source>
</evidence>
<sequence>MQLTVWTYEGPPHVGAMRVATGMEGLHYVLHAPQGDTYADLLFTMIERRNKRPPVTYTTFAARDLGKDTAELFMKAARDAYERFKPQAMIVGASCTGSLIQDDPGGLAKSLGFPIPVVAIDLPAYQRKENWGAAETLYQLVRALAGPKAPAPGAKRPERAPGVRPTCNLLGPTALGFRHRDDITEITGLLGKLGIDVNVVAPMGATPADIARLGDADFNVVMYPEIAGQAASWLHRIFHQPFTKTVPIGVSATRDFIKEVAQLAGVDATAVLEAASTRLPWYSHSVDSTYLTNKRVFIFGDATHAIAAARIASEELGFKVVGLGSYSREFGRELREAAKHYDVEPLITDDYLEVEAKVAELHPELVLGTQMERHIAKRLGVPCAVISAPVHVQDFPARYAPQMGFEGANVIFDTWVHPLMMGLEEHLLTMFKDDFEFKDGAMPSHLGTGHAAPVAEVIAESAPPAVAATAPEIVSVANAAASAAVWAPEAEKELQKIPFFVRGKARRNTERFANENGVATITVETLYDAKAHFAR</sequence>
<accession>Q132N3</accession>
<organism>
    <name type="scientific">Rhodopseudomonas palustris (strain BisB5)</name>
    <dbReference type="NCBI Taxonomy" id="316057"/>
    <lineage>
        <taxon>Bacteria</taxon>
        <taxon>Pseudomonadati</taxon>
        <taxon>Pseudomonadota</taxon>
        <taxon>Alphaproteobacteria</taxon>
        <taxon>Hyphomicrobiales</taxon>
        <taxon>Nitrobacteraceae</taxon>
        <taxon>Rhodopseudomonas</taxon>
    </lineage>
</organism>
<reference key="1">
    <citation type="submission" date="2006-03" db="EMBL/GenBank/DDBJ databases">
        <title>Complete sequence of Rhodopseudomonas palustris BisB5.</title>
        <authorList>
            <consortium name="US DOE Joint Genome Institute"/>
            <person name="Copeland A."/>
            <person name="Lucas S."/>
            <person name="Lapidus A."/>
            <person name="Barry K."/>
            <person name="Detter J.C."/>
            <person name="Glavina del Rio T."/>
            <person name="Hammon N."/>
            <person name="Israni S."/>
            <person name="Dalin E."/>
            <person name="Tice H."/>
            <person name="Pitluck S."/>
            <person name="Chain P."/>
            <person name="Malfatti S."/>
            <person name="Shin M."/>
            <person name="Vergez L."/>
            <person name="Schmutz J."/>
            <person name="Larimer F."/>
            <person name="Land M."/>
            <person name="Hauser L."/>
            <person name="Pelletier D.A."/>
            <person name="Kyrpides N."/>
            <person name="Lykidis A."/>
            <person name="Oda Y."/>
            <person name="Harwood C.S."/>
            <person name="Richardson P."/>
        </authorList>
    </citation>
    <scope>NUCLEOTIDE SEQUENCE [LARGE SCALE GENOMIC DNA]</scope>
    <source>
        <strain>BisB5</strain>
    </source>
</reference>
<comment type="function">
    <text evidence="1">Component of the dark-operative protochlorophyllide reductase (DPOR) that uses Mg-ATP and reduced ferredoxin to reduce ring D of protochlorophyllide (Pchlide) to form chlorophyllide a (Chlide). This reaction is light-independent. The NB-protein (BchN-BchB) is the catalytic component of the complex.</text>
</comment>
<comment type="catalytic activity">
    <reaction evidence="1">
        <text>chlorophyllide a + oxidized 2[4Fe-4S]-[ferredoxin] + 2 ADP + 2 phosphate = protochlorophyllide a + reduced 2[4Fe-4S]-[ferredoxin] + 2 ATP + 2 H2O</text>
        <dbReference type="Rhea" id="RHEA:28202"/>
        <dbReference type="Rhea" id="RHEA-COMP:10002"/>
        <dbReference type="Rhea" id="RHEA-COMP:10004"/>
        <dbReference type="ChEBI" id="CHEBI:15377"/>
        <dbReference type="ChEBI" id="CHEBI:30616"/>
        <dbReference type="ChEBI" id="CHEBI:33722"/>
        <dbReference type="ChEBI" id="CHEBI:33723"/>
        <dbReference type="ChEBI" id="CHEBI:43474"/>
        <dbReference type="ChEBI" id="CHEBI:83348"/>
        <dbReference type="ChEBI" id="CHEBI:83350"/>
        <dbReference type="ChEBI" id="CHEBI:456216"/>
        <dbReference type="EC" id="1.3.7.7"/>
    </reaction>
</comment>
<comment type="cofactor">
    <cofactor evidence="1">
        <name>[4Fe-4S] cluster</name>
        <dbReference type="ChEBI" id="CHEBI:49883"/>
    </cofactor>
    <text evidence="1">Binds 1 [4Fe-4S] cluster per heterodimer. The cluster is bound at the heterodimer interface by residues from both subunits.</text>
</comment>
<comment type="pathway">
    <text evidence="1">Porphyrin-containing compound metabolism; bacteriochlorophyll biosynthesis (light-independent).</text>
</comment>
<comment type="subunit">
    <text evidence="1">Protochlorophyllide reductase is composed of three subunits; BchL, BchN and BchB. Forms a heterotetramer of two BchB and two BchN subunits.</text>
</comment>
<comment type="similarity">
    <text evidence="1">Belongs to the ChlB/BchB/BchZ family.</text>
</comment>
<gene>
    <name evidence="1" type="primary">bchB</name>
    <name type="ordered locus">RPD_3735</name>
</gene>
<dbReference type="EC" id="1.3.7.7" evidence="1"/>
<dbReference type="EMBL" id="CP000283">
    <property type="protein sequence ID" value="ABE40956.1"/>
    <property type="molecule type" value="Genomic_DNA"/>
</dbReference>
<dbReference type="SMR" id="Q132N3"/>
<dbReference type="STRING" id="316057.RPD_3735"/>
<dbReference type="KEGG" id="rpd:RPD_3735"/>
<dbReference type="eggNOG" id="COG2710">
    <property type="taxonomic scope" value="Bacteria"/>
</dbReference>
<dbReference type="HOGENOM" id="CLU_025470_0_0_5"/>
<dbReference type="BioCyc" id="RPAL316057:RPD_RS18780-MONOMER"/>
<dbReference type="UniPathway" id="UPA00671"/>
<dbReference type="Proteomes" id="UP000001818">
    <property type="component" value="Chromosome"/>
</dbReference>
<dbReference type="GO" id="GO:0051539">
    <property type="term" value="F:4 iron, 4 sulfur cluster binding"/>
    <property type="evidence" value="ECO:0007669"/>
    <property type="project" value="UniProtKB-UniRule"/>
</dbReference>
<dbReference type="GO" id="GO:0005524">
    <property type="term" value="F:ATP binding"/>
    <property type="evidence" value="ECO:0007669"/>
    <property type="project" value="UniProtKB-UniRule"/>
</dbReference>
<dbReference type="GO" id="GO:0046872">
    <property type="term" value="F:metal ion binding"/>
    <property type="evidence" value="ECO:0007669"/>
    <property type="project" value="UniProtKB-KW"/>
</dbReference>
<dbReference type="GO" id="GO:0016730">
    <property type="term" value="F:oxidoreductase activity, acting on iron-sulfur proteins as donors"/>
    <property type="evidence" value="ECO:0007669"/>
    <property type="project" value="InterPro"/>
</dbReference>
<dbReference type="GO" id="GO:0016636">
    <property type="term" value="F:oxidoreductase activity, acting on the CH-CH group of donors, iron-sulfur protein as acceptor"/>
    <property type="evidence" value="ECO:0007669"/>
    <property type="project" value="UniProtKB-UniRule"/>
</dbReference>
<dbReference type="GO" id="GO:0036070">
    <property type="term" value="P:light-independent bacteriochlorophyll biosynthetic process"/>
    <property type="evidence" value="ECO:0007669"/>
    <property type="project" value="UniProtKB-UniRule"/>
</dbReference>
<dbReference type="GO" id="GO:0019685">
    <property type="term" value="P:photosynthesis, dark reaction"/>
    <property type="evidence" value="ECO:0007669"/>
    <property type="project" value="InterPro"/>
</dbReference>
<dbReference type="Gene3D" id="1.20.89.20">
    <property type="match status" value="1"/>
</dbReference>
<dbReference type="Gene3D" id="3.40.50.1980">
    <property type="entry name" value="Nitrogenase molybdenum iron protein domain"/>
    <property type="match status" value="3"/>
</dbReference>
<dbReference type="Gene3D" id="1.10.8.550">
    <property type="entry name" value="Proto-chlorophyllide reductase 57 kD subunit B"/>
    <property type="match status" value="1"/>
</dbReference>
<dbReference type="HAMAP" id="MF_00353">
    <property type="entry name" value="ChlB_BchB"/>
    <property type="match status" value="1"/>
</dbReference>
<dbReference type="InterPro" id="IPR050152">
    <property type="entry name" value="ChlB/BchB/BchZ"/>
</dbReference>
<dbReference type="InterPro" id="IPR013580">
    <property type="entry name" value="LI-POR_suB-like_C"/>
</dbReference>
<dbReference type="InterPro" id="IPR000510">
    <property type="entry name" value="Nase/OxRdtase_comp1"/>
</dbReference>
<dbReference type="InterPro" id="IPR042298">
    <property type="entry name" value="P-CP_red_C"/>
</dbReference>
<dbReference type="InterPro" id="IPR005969">
    <property type="entry name" value="Protochl_reductB"/>
</dbReference>
<dbReference type="InterPro" id="IPR016209">
    <property type="entry name" value="Protochlorophyllide_Rdtase"/>
</dbReference>
<dbReference type="NCBIfam" id="TIGR01278">
    <property type="entry name" value="DPOR_BchB"/>
    <property type="match status" value="1"/>
</dbReference>
<dbReference type="PANTHER" id="PTHR33712">
    <property type="entry name" value="LIGHT-INDEPENDENT PROTOCHLOROPHYLLIDE REDUCTASE SUBUNIT B"/>
    <property type="match status" value="1"/>
</dbReference>
<dbReference type="PANTHER" id="PTHR33712:SF7">
    <property type="entry name" value="LIGHT-INDEPENDENT PROTOCHLOROPHYLLIDE REDUCTASE SUBUNIT B"/>
    <property type="match status" value="1"/>
</dbReference>
<dbReference type="Pfam" id="PF00148">
    <property type="entry name" value="Oxidored_nitro"/>
    <property type="match status" value="1"/>
</dbReference>
<dbReference type="Pfam" id="PF08369">
    <property type="entry name" value="PCP_red"/>
    <property type="match status" value="1"/>
</dbReference>
<dbReference type="PIRSF" id="PIRSF000163">
    <property type="entry name" value="PCP_ChlB"/>
    <property type="match status" value="1"/>
</dbReference>
<dbReference type="SUPFAM" id="SSF53807">
    <property type="entry name" value="Helical backbone' metal receptor"/>
    <property type="match status" value="1"/>
</dbReference>
<proteinExistence type="inferred from homology"/>
<name>BCHB_RHOPS</name>
<protein>
    <recommendedName>
        <fullName evidence="1">Light-independent protochlorophyllide reductase subunit B</fullName>
        <shortName evidence="1">DPOR subunit B</shortName>
        <shortName evidence="1">LI-POR subunit B</shortName>
        <ecNumber evidence="1">1.3.7.7</ecNumber>
    </recommendedName>
</protein>